<proteinExistence type="inferred from homology"/>
<feature type="chain" id="PRO_0000108038" description="Phosphoglycolate phosphatase">
    <location>
        <begin position="1"/>
        <end position="219"/>
    </location>
</feature>
<feature type="active site" description="Nucleophile" evidence="1">
    <location>
        <position position="8"/>
    </location>
</feature>
<feature type="binding site" evidence="1">
    <location>
        <position position="8"/>
    </location>
    <ligand>
        <name>Mg(2+)</name>
        <dbReference type="ChEBI" id="CHEBI:18420"/>
    </ligand>
</feature>
<feature type="binding site" evidence="1">
    <location>
        <position position="10"/>
    </location>
    <ligand>
        <name>Mg(2+)</name>
        <dbReference type="ChEBI" id="CHEBI:18420"/>
    </ligand>
</feature>
<feature type="binding site" evidence="1">
    <location>
        <position position="167"/>
    </location>
    <ligand>
        <name>Mg(2+)</name>
        <dbReference type="ChEBI" id="CHEBI:18420"/>
    </ligand>
</feature>
<sequence>MAPALIFDLDGTLIDSAPAIHKVSNDVLRARGYAPLGLDQIRSFVGQGAPHLVRCLLTTAGEDPEGPLFDAIYADLVSRYETDVEGNTLYPGVITALQRLREMGCPMAITTNKPYKPALAAIAHVGLTDYFQLVIGGDSLPTRKPNPEMVNEARRVLRRPHALYIGDSEIDAQTAQNAGLPFVIYTEGYRKTPLDALPHAAKFHDFSALPGIVEGWTWS</sequence>
<dbReference type="EC" id="3.1.3.18"/>
<dbReference type="EMBL" id="U23145">
    <property type="protein sequence ID" value="AAB82051.1"/>
    <property type="molecule type" value="Genomic_DNA"/>
</dbReference>
<dbReference type="PIR" id="T10509">
    <property type="entry name" value="T10509"/>
</dbReference>
<dbReference type="RefSeq" id="WP_055208338.1">
    <property type="nucleotide sequence ID" value="NZ_CP061202.1"/>
</dbReference>
<dbReference type="SMR" id="O33512"/>
<dbReference type="UniPathway" id="UPA00865">
    <property type="reaction ID" value="UER00834"/>
</dbReference>
<dbReference type="GO" id="GO:0005829">
    <property type="term" value="C:cytosol"/>
    <property type="evidence" value="ECO:0007669"/>
    <property type="project" value="TreeGrafter"/>
</dbReference>
<dbReference type="GO" id="GO:0046872">
    <property type="term" value="F:metal ion binding"/>
    <property type="evidence" value="ECO:0007669"/>
    <property type="project" value="UniProtKB-KW"/>
</dbReference>
<dbReference type="GO" id="GO:0008967">
    <property type="term" value="F:phosphoglycolate phosphatase activity"/>
    <property type="evidence" value="ECO:0007669"/>
    <property type="project" value="UniProtKB-UniRule"/>
</dbReference>
<dbReference type="GO" id="GO:0006281">
    <property type="term" value="P:DNA repair"/>
    <property type="evidence" value="ECO:0007669"/>
    <property type="project" value="TreeGrafter"/>
</dbReference>
<dbReference type="GO" id="GO:0046295">
    <property type="term" value="P:glycolate biosynthetic process"/>
    <property type="evidence" value="ECO:0007669"/>
    <property type="project" value="UniProtKB-UniRule"/>
</dbReference>
<dbReference type="GO" id="GO:0019253">
    <property type="term" value="P:reductive pentose-phosphate cycle"/>
    <property type="evidence" value="ECO:0007669"/>
    <property type="project" value="UniProtKB-KW"/>
</dbReference>
<dbReference type="CDD" id="cd07512">
    <property type="entry name" value="HAD_PGPase"/>
    <property type="match status" value="1"/>
</dbReference>
<dbReference type="Gene3D" id="3.40.50.1000">
    <property type="entry name" value="HAD superfamily/HAD-like"/>
    <property type="match status" value="1"/>
</dbReference>
<dbReference type="Gene3D" id="1.10.150.240">
    <property type="entry name" value="Putative phosphatase, domain 2"/>
    <property type="match status" value="1"/>
</dbReference>
<dbReference type="HAMAP" id="MF_00495">
    <property type="entry name" value="GPH_hydrolase_bact"/>
    <property type="match status" value="1"/>
</dbReference>
<dbReference type="InterPro" id="IPR050155">
    <property type="entry name" value="HAD-like_hydrolase_sf"/>
</dbReference>
<dbReference type="InterPro" id="IPR036412">
    <property type="entry name" value="HAD-like_sf"/>
</dbReference>
<dbReference type="InterPro" id="IPR006439">
    <property type="entry name" value="HAD-SF_hydro_IA"/>
</dbReference>
<dbReference type="InterPro" id="IPR041492">
    <property type="entry name" value="HAD_2"/>
</dbReference>
<dbReference type="InterPro" id="IPR023214">
    <property type="entry name" value="HAD_sf"/>
</dbReference>
<dbReference type="InterPro" id="IPR023198">
    <property type="entry name" value="PGP-like_dom2"/>
</dbReference>
<dbReference type="InterPro" id="IPR037512">
    <property type="entry name" value="PGPase_prok"/>
</dbReference>
<dbReference type="NCBIfam" id="TIGR01549">
    <property type="entry name" value="HAD-SF-IA-v1"/>
    <property type="match status" value="1"/>
</dbReference>
<dbReference type="PANTHER" id="PTHR43434:SF24">
    <property type="entry name" value="HYDROLASE-RELATED"/>
    <property type="match status" value="1"/>
</dbReference>
<dbReference type="PANTHER" id="PTHR43434">
    <property type="entry name" value="PHOSPHOGLYCOLATE PHOSPHATASE"/>
    <property type="match status" value="1"/>
</dbReference>
<dbReference type="Pfam" id="PF13419">
    <property type="entry name" value="HAD_2"/>
    <property type="match status" value="1"/>
</dbReference>
<dbReference type="PRINTS" id="PR00413">
    <property type="entry name" value="HADHALOGNASE"/>
</dbReference>
<dbReference type="SFLD" id="SFLDG01135">
    <property type="entry name" value="C1.5.6:_HAD__Beta-PGM__Phospha"/>
    <property type="match status" value="1"/>
</dbReference>
<dbReference type="SFLD" id="SFLDG01129">
    <property type="entry name" value="C1.5:_HAD__Beta-PGM__Phosphata"/>
    <property type="match status" value="1"/>
</dbReference>
<dbReference type="SUPFAM" id="SSF56784">
    <property type="entry name" value="HAD-like"/>
    <property type="match status" value="1"/>
</dbReference>
<organism>
    <name type="scientific">Rhodobacter capsulatus</name>
    <name type="common">Rhodopseudomonas capsulata</name>
    <dbReference type="NCBI Taxonomy" id="1061"/>
    <lineage>
        <taxon>Bacteria</taxon>
        <taxon>Pseudomonadati</taxon>
        <taxon>Pseudomonadota</taxon>
        <taxon>Alphaproteobacteria</taxon>
        <taxon>Rhodobacterales</taxon>
        <taxon>Rhodobacter group</taxon>
        <taxon>Rhodobacter</taxon>
    </lineage>
</organism>
<keyword id="KW-0113">Calvin cycle</keyword>
<keyword id="KW-0119">Carbohydrate metabolism</keyword>
<keyword id="KW-0378">Hydrolase</keyword>
<keyword id="KW-0460">Magnesium</keyword>
<keyword id="KW-0479">Metal-binding</keyword>
<evidence type="ECO:0000250" key="1"/>
<evidence type="ECO:0000305" key="2"/>
<comment type="function">
    <text evidence="1">Specifically catalyzes the dephosphorylation of 2-phosphoglycolate. Is involved in the dissimilation of the intracellular 2-phosphoglycolate formed during the DNA repair of 3'-phosphoglycolate ends, a major class of DNA lesions induced by oxidative stress (By similarity).</text>
</comment>
<comment type="catalytic activity">
    <reaction>
        <text>2-phosphoglycolate + H2O = glycolate + phosphate</text>
        <dbReference type="Rhea" id="RHEA:14369"/>
        <dbReference type="ChEBI" id="CHEBI:15377"/>
        <dbReference type="ChEBI" id="CHEBI:29805"/>
        <dbReference type="ChEBI" id="CHEBI:43474"/>
        <dbReference type="ChEBI" id="CHEBI:58033"/>
        <dbReference type="EC" id="3.1.3.18"/>
    </reaction>
</comment>
<comment type="cofactor">
    <cofactor evidence="1">
        <name>Mg(2+)</name>
        <dbReference type="ChEBI" id="CHEBI:18420"/>
    </cofactor>
</comment>
<comment type="pathway">
    <text>Organic acid metabolism; glycolate biosynthesis; glycolate from 2-phosphoglycolate: step 1/1.</text>
</comment>
<comment type="similarity">
    <text evidence="2">Belongs to the HAD-like hydrolase superfamily. CbbY/CbbZ/Gph/YieH family.</text>
</comment>
<gene>
    <name type="primary">cbbZ</name>
</gene>
<name>GPH_RHOCA</name>
<protein>
    <recommendedName>
        <fullName>Phosphoglycolate phosphatase</fullName>
        <shortName>PGP</shortName>
        <shortName>PGPase</shortName>
        <ecNumber>3.1.3.18</ecNumber>
    </recommendedName>
</protein>
<reference key="1">
    <citation type="submission" date="1995-04" db="EMBL/GenBank/DDBJ databases">
        <authorList>
            <person name="Larimer F.W."/>
            <person name="Lu T.-Y.S."/>
            <person name="Buley D.M."/>
        </authorList>
    </citation>
    <scope>NUCLEOTIDE SEQUENCE [GENOMIC DNA]</scope>
    <source>
        <strain>ATCC 11166 / DSM 1710 / CCUG 31484 / JCM 21090 / LMG 2962 / NBRC 16435 / NCIMB 8254 / ATH 2.3.1</strain>
    </source>
</reference>
<accession>O33512</accession>